<organism>
    <name type="scientific">Hordeum vulgare</name>
    <name type="common">Barley</name>
    <dbReference type="NCBI Taxonomy" id="4513"/>
    <lineage>
        <taxon>Eukaryota</taxon>
        <taxon>Viridiplantae</taxon>
        <taxon>Streptophyta</taxon>
        <taxon>Embryophyta</taxon>
        <taxon>Tracheophyta</taxon>
        <taxon>Spermatophyta</taxon>
        <taxon>Magnoliopsida</taxon>
        <taxon>Liliopsida</taxon>
        <taxon>Poales</taxon>
        <taxon>Poaceae</taxon>
        <taxon>BOP clade</taxon>
        <taxon>Pooideae</taxon>
        <taxon>Triticodae</taxon>
        <taxon>Triticeae</taxon>
        <taxon>Hordeinae</taxon>
        <taxon>Hordeum</taxon>
    </lineage>
</organism>
<evidence type="ECO:0000250" key="1"/>
<evidence type="ECO:0000250" key="2">
    <source>
        <dbReference type="UniProtKB" id="P82412"/>
    </source>
</evidence>
<evidence type="ECO:0000255" key="3"/>
<evidence type="ECO:0000256" key="4">
    <source>
        <dbReference type="SAM" id="MobiDB-lite"/>
    </source>
</evidence>
<evidence type="ECO:0000305" key="5"/>
<name>RRP3_HORVU</name>
<dbReference type="EMBL" id="AJ222779">
    <property type="protein sequence ID" value="CAA10984.1"/>
    <property type="molecule type" value="mRNA"/>
</dbReference>
<dbReference type="PIR" id="T05925">
    <property type="entry name" value="T05925"/>
</dbReference>
<dbReference type="SMR" id="O48609"/>
<dbReference type="ExpressionAtlas" id="O48609">
    <property type="expression patterns" value="baseline and differential"/>
</dbReference>
<dbReference type="GO" id="GO:0009507">
    <property type="term" value="C:chloroplast"/>
    <property type="evidence" value="ECO:0007669"/>
    <property type="project" value="UniProtKB-SubCell"/>
</dbReference>
<dbReference type="GO" id="GO:1990904">
    <property type="term" value="C:ribonucleoprotein complex"/>
    <property type="evidence" value="ECO:0007669"/>
    <property type="project" value="UniProtKB-KW"/>
</dbReference>
<dbReference type="GO" id="GO:0005840">
    <property type="term" value="C:ribosome"/>
    <property type="evidence" value="ECO:0007669"/>
    <property type="project" value="UniProtKB-KW"/>
</dbReference>
<dbReference type="GO" id="GO:0003735">
    <property type="term" value="F:structural constituent of ribosome"/>
    <property type="evidence" value="ECO:0007669"/>
    <property type="project" value="InterPro"/>
</dbReference>
<dbReference type="GO" id="GO:0006412">
    <property type="term" value="P:translation"/>
    <property type="evidence" value="ECO:0007669"/>
    <property type="project" value="InterPro"/>
</dbReference>
<dbReference type="Gene3D" id="3.30.390.140">
    <property type="match status" value="1"/>
</dbReference>
<dbReference type="InterPro" id="IPR038447">
    <property type="entry name" value="PSRP-3/Ycf65_sf"/>
</dbReference>
<dbReference type="InterPro" id="IPR006924">
    <property type="entry name" value="Ribosomal_PSRP3/Ycf65"/>
</dbReference>
<dbReference type="PANTHER" id="PTHR35108">
    <property type="entry name" value="30S RIBOSOMAL PROTEIN 3, CHLOROPLASTIC"/>
    <property type="match status" value="1"/>
</dbReference>
<dbReference type="PANTHER" id="PTHR35108:SF1">
    <property type="entry name" value="OS04G0461100 PROTEIN"/>
    <property type="match status" value="1"/>
</dbReference>
<dbReference type="Pfam" id="PF04839">
    <property type="entry name" value="PSRP-3_Ycf65"/>
    <property type="match status" value="1"/>
</dbReference>
<gene>
    <name type="primary">PSRP3</name>
</gene>
<reference key="1">
    <citation type="submission" date="1997-12" db="EMBL/GenBank/DDBJ databases">
        <title>Analysis of randomly selected cDNAs reveals the expression of stress- and defence-related genes in the barley mutant albostrians.</title>
        <authorList>
            <person name="Hess W.R."/>
            <person name="Golz R."/>
            <person name="Boerner T."/>
        </authorList>
    </citation>
    <scope>NUCLEOTIDE SEQUENCE [MRNA]</scope>
    <source>
        <strain>cv. Haisa</strain>
        <tissue>Leaf</tissue>
    </source>
</reference>
<protein>
    <recommendedName>
        <fullName evidence="5">Small ribosomal subunit protein cS23</fullName>
    </recommendedName>
    <alternativeName>
        <fullName>30S ribosomal protein 3, chloroplastic</fullName>
    </alternativeName>
    <alternativeName>
        <fullName>Plastid-specific 30S ribosomal protein 3</fullName>
        <shortName>PSRP-3</shortName>
    </alternativeName>
</protein>
<proteinExistence type="evidence at transcript level"/>
<keyword id="KW-0150">Chloroplast</keyword>
<keyword id="KW-0934">Plastid</keyword>
<keyword id="KW-0687">Ribonucleoprotein</keyword>
<keyword id="KW-0689">Ribosomal protein</keyword>
<keyword id="KW-0809">Transit peptide</keyword>
<sequence>MLPMSVHPATTPALASRPRVSLPRPSTPSSSSSLVHLKSRRPPLRSLRSLTAAAAAAAVEAGEPYFGLGDDEPLGGEGDAEAVVESEEYKVEVPEKQDPMLVLKFIWMEKNIGIALDQMVPGVGSIPLSPYYFWPRKDAWEELRAKLEEKEWISQKQMIILLNQATDIINLWQQGGGSLST</sequence>
<comment type="function">
    <text evidence="2">Component of the chloroplast ribosome (chloro-ribosome), a dedicated translation machinery responsible for the synthesis of chloroplast genome-encoded proteins, including proteins of the transcription and translation machinery and components of the photosynthetic apparatus.</text>
</comment>
<comment type="subunit">
    <text evidence="2">Part of the 30S ribosomal subunit.</text>
</comment>
<comment type="subcellular location">
    <subcellularLocation>
        <location evidence="1">Plastid</location>
        <location evidence="1">Chloroplast</location>
    </subcellularLocation>
</comment>
<comment type="similarity">
    <text evidence="5">Belongs to the chloroplast-specific ribosomal protein cS23 family.</text>
</comment>
<feature type="transit peptide" description="Chloroplast" evidence="3">
    <location>
        <begin position="1"/>
        <end status="unknown"/>
    </location>
</feature>
<feature type="chain" id="PRO_0000041524" description="Small ribosomal subunit protein cS23">
    <location>
        <begin status="unknown"/>
        <end position="181"/>
    </location>
</feature>
<feature type="region of interest" description="Disordered" evidence="4">
    <location>
        <begin position="1"/>
        <end position="40"/>
    </location>
</feature>
<feature type="compositionally biased region" description="Low complexity" evidence="4">
    <location>
        <begin position="14"/>
        <end position="36"/>
    </location>
</feature>
<accession>O48609</accession>